<evidence type="ECO:0000255" key="1">
    <source>
        <dbReference type="HAMAP-Rule" id="MF_01972"/>
    </source>
</evidence>
<evidence type="ECO:0000305" key="2"/>
<organism>
    <name type="scientific">Xanthomonas oryzae pv. oryzae (strain KACC10331 / KXO85)</name>
    <dbReference type="NCBI Taxonomy" id="291331"/>
    <lineage>
        <taxon>Bacteria</taxon>
        <taxon>Pseudomonadati</taxon>
        <taxon>Pseudomonadota</taxon>
        <taxon>Gammaproteobacteria</taxon>
        <taxon>Lysobacterales</taxon>
        <taxon>Lysobacteraceae</taxon>
        <taxon>Xanthomonas</taxon>
    </lineage>
</organism>
<comment type="function">
    <text evidence="1">Heme-dependent dioxygenase that catalyzes the oxidative cleavage of the L-tryptophan (L-Trp) pyrrole ring and converts L-tryptophan to N-formyl-L-kynurenine. Catalyzes the oxidative cleavage of the indole moiety.</text>
</comment>
<comment type="catalytic activity">
    <reaction evidence="1">
        <text>L-tryptophan + O2 = N-formyl-L-kynurenine</text>
        <dbReference type="Rhea" id="RHEA:24536"/>
        <dbReference type="ChEBI" id="CHEBI:15379"/>
        <dbReference type="ChEBI" id="CHEBI:57912"/>
        <dbReference type="ChEBI" id="CHEBI:58629"/>
        <dbReference type="EC" id="1.13.11.11"/>
    </reaction>
</comment>
<comment type="cofactor">
    <cofactor evidence="1">
        <name>heme</name>
        <dbReference type="ChEBI" id="CHEBI:30413"/>
    </cofactor>
    <text evidence="1">Binds 1 heme group per subunit.</text>
</comment>
<comment type="pathway">
    <text evidence="1">Amino-acid degradation; L-tryptophan degradation via kynurenine pathway; L-kynurenine from L-tryptophan: step 1/2.</text>
</comment>
<comment type="subunit">
    <text evidence="1">Homotetramer.</text>
</comment>
<comment type="similarity">
    <text evidence="1">Belongs to the tryptophan 2,3-dioxygenase family.</text>
</comment>
<comment type="sequence caution" evidence="2">
    <conflict type="erroneous initiation">
        <sequence resource="EMBL-CDS" id="AAW77329"/>
    </conflict>
</comment>
<proteinExistence type="inferred from homology"/>
<name>T23O_XANOR</name>
<reference key="1">
    <citation type="journal article" date="2005" name="Nucleic Acids Res.">
        <title>The genome sequence of Xanthomonas oryzae pathovar oryzae KACC10331, the bacterial blight pathogen of rice.</title>
        <authorList>
            <person name="Lee B.-M."/>
            <person name="Park Y.-J."/>
            <person name="Park D.-S."/>
            <person name="Kang H.-W."/>
            <person name="Kim J.-G."/>
            <person name="Song E.-S."/>
            <person name="Park I.-C."/>
            <person name="Yoon U.-H."/>
            <person name="Hahn J.-H."/>
            <person name="Koo B.-S."/>
            <person name="Lee G.-B."/>
            <person name="Kim H."/>
            <person name="Park H.-S."/>
            <person name="Yoon K.-O."/>
            <person name="Kim J.-H."/>
            <person name="Jung C.-H."/>
            <person name="Koh N.-H."/>
            <person name="Seo J.-S."/>
            <person name="Go S.-J."/>
        </authorList>
    </citation>
    <scope>NUCLEOTIDE SEQUENCE [LARGE SCALE GENOMIC DNA]</scope>
    <source>
        <strain>KACC10331 / KXO85</strain>
    </source>
</reference>
<dbReference type="EC" id="1.13.11.11" evidence="1"/>
<dbReference type="EMBL" id="AE013598">
    <property type="protein sequence ID" value="AAW77329.1"/>
    <property type="status" value="ALT_INIT"/>
    <property type="molecule type" value="Genomic_DNA"/>
</dbReference>
<dbReference type="SMR" id="Q5GVE4"/>
<dbReference type="STRING" id="291331.XOO4075"/>
<dbReference type="KEGG" id="xoo:XOO4075"/>
<dbReference type="HOGENOM" id="CLU_063240_0_0_6"/>
<dbReference type="UniPathway" id="UPA00333">
    <property type="reaction ID" value="UER00453"/>
</dbReference>
<dbReference type="Proteomes" id="UP000006735">
    <property type="component" value="Chromosome"/>
</dbReference>
<dbReference type="GO" id="GO:0020037">
    <property type="term" value="F:heme binding"/>
    <property type="evidence" value="ECO:0000250"/>
    <property type="project" value="UniProtKB"/>
</dbReference>
<dbReference type="GO" id="GO:0046872">
    <property type="term" value="F:metal ion binding"/>
    <property type="evidence" value="ECO:0007669"/>
    <property type="project" value="UniProtKB-KW"/>
</dbReference>
<dbReference type="GO" id="GO:0004833">
    <property type="term" value="F:tryptophan 2,3-dioxygenase activity"/>
    <property type="evidence" value="ECO:0000250"/>
    <property type="project" value="UniProtKB"/>
</dbReference>
<dbReference type="GO" id="GO:0019442">
    <property type="term" value="P:L-tryptophan catabolic process to acetyl-CoA"/>
    <property type="evidence" value="ECO:0007669"/>
    <property type="project" value="TreeGrafter"/>
</dbReference>
<dbReference type="GO" id="GO:0019441">
    <property type="term" value="P:L-tryptophan catabolic process to kynurenine"/>
    <property type="evidence" value="ECO:0000250"/>
    <property type="project" value="UniProtKB"/>
</dbReference>
<dbReference type="FunFam" id="1.20.58.480:FF:000001">
    <property type="entry name" value="Tryptophan 2,3-dioxygenase"/>
    <property type="match status" value="1"/>
</dbReference>
<dbReference type="Gene3D" id="1.20.58.480">
    <property type="match status" value="1"/>
</dbReference>
<dbReference type="HAMAP" id="MF_01972">
    <property type="entry name" value="T23O"/>
    <property type="match status" value="1"/>
</dbReference>
<dbReference type="InterPro" id="IPR037217">
    <property type="entry name" value="Trp/Indoleamine_2_3_dOase-like"/>
</dbReference>
<dbReference type="InterPro" id="IPR004981">
    <property type="entry name" value="Trp_2_3_dOase"/>
</dbReference>
<dbReference type="PANTHER" id="PTHR10138">
    <property type="entry name" value="TRYPTOPHAN 2,3-DIOXYGENASE"/>
    <property type="match status" value="1"/>
</dbReference>
<dbReference type="PANTHER" id="PTHR10138:SF0">
    <property type="entry name" value="TRYPTOPHAN 2,3-DIOXYGENASE"/>
    <property type="match status" value="1"/>
</dbReference>
<dbReference type="Pfam" id="PF03301">
    <property type="entry name" value="Trp_dioxygenase"/>
    <property type="match status" value="2"/>
</dbReference>
<dbReference type="SUPFAM" id="SSF140959">
    <property type="entry name" value="Indolic compounds 2,3-dioxygenase-like"/>
    <property type="match status" value="1"/>
</dbReference>
<gene>
    <name evidence="1" type="primary">kynA</name>
    <name type="ordered locus">XOO4075</name>
</gene>
<keyword id="KW-0223">Dioxygenase</keyword>
<keyword id="KW-0349">Heme</keyword>
<keyword id="KW-0408">Iron</keyword>
<keyword id="KW-0479">Metal-binding</keyword>
<keyword id="KW-0560">Oxidoreductase</keyword>
<keyword id="KW-1185">Reference proteome</keyword>
<keyword id="KW-0823">Tryptophan catabolism</keyword>
<protein>
    <recommendedName>
        <fullName evidence="1">Tryptophan 2,3-dioxygenase</fullName>
        <shortName evidence="1">TDO</shortName>
        <ecNumber evidence="1">1.13.11.11</ecNumber>
    </recommendedName>
    <alternativeName>
        <fullName evidence="1">Tryptamin 2,3-dioxygenase</fullName>
    </alternativeName>
    <alternativeName>
        <fullName evidence="1">Tryptophan oxygenase</fullName>
        <shortName evidence="1">TO</shortName>
        <shortName evidence="1">TRPO</shortName>
    </alternativeName>
    <alternativeName>
        <fullName evidence="1">Tryptophan pyrrolase</fullName>
    </alternativeName>
    <alternativeName>
        <fullName evidence="1">Tryptophanase</fullName>
    </alternativeName>
</protein>
<sequence length="297" mass="34503">MPVDKNLRDLEPGIHTDLEGRLTYGGYLRLDQLLSAQQPLSEPAHHDEMLFIIQHQTSELWLKLLAHELRAAIVHLQHDEVWQCRKVLARSKQVLRQLTEQWSVLETLTPSEYMGFRDVLGPSSGFQSLQYRYIEFLLGNKNPQVLQVFAYDPQGRARLREVLEAPSLYEEFLRYLARFGHAIPQQYHARDWTVAHVADDTLRPVFERIYENTDRYWREYALCEDLVDVETQFQLWRFRHMRTVMRVIGFKRGTGGSSGVGFLQQALALTFFPELFDVRTSVGVDSRPPQGAADTQG</sequence>
<feature type="chain" id="PRO_0000360146" description="Tryptophan 2,3-dioxygenase">
    <location>
        <begin position="1"/>
        <end position="297"/>
    </location>
</feature>
<feature type="binding site" evidence="1">
    <location>
        <begin position="51"/>
        <end position="55"/>
    </location>
    <ligand>
        <name>substrate</name>
    </ligand>
</feature>
<feature type="binding site" evidence="1">
    <location>
        <position position="113"/>
    </location>
    <ligand>
        <name>substrate</name>
    </ligand>
</feature>
<feature type="binding site" evidence="1">
    <location>
        <position position="117"/>
    </location>
    <ligand>
        <name>substrate</name>
    </ligand>
</feature>
<feature type="binding site" description="axial binding residue" evidence="1">
    <location>
        <position position="240"/>
    </location>
    <ligand>
        <name>heme</name>
        <dbReference type="ChEBI" id="CHEBI:30413"/>
    </ligand>
    <ligandPart>
        <name>Fe</name>
        <dbReference type="ChEBI" id="CHEBI:18248"/>
    </ligandPart>
</feature>
<feature type="binding site" evidence="1">
    <location>
        <position position="254"/>
    </location>
    <ligand>
        <name>substrate</name>
    </ligand>
</feature>
<accession>Q5GVE4</accession>